<comment type="function">
    <text evidence="4 5">Regulates insulin-mediated adipose tissue glucose uptake and transport by modulation of SLC2A4 recycling. Not required for SLC2A4 membrane fusion upon an initial stimulus, but rather is necessary for proper protein recycling during prolonged insulin stimulation.</text>
</comment>
<comment type="subunit">
    <text evidence="5">Interacts with SLC2A4; the interaction is required for proper SLC2A4 reacycling after insulin stimulation.</text>
</comment>
<comment type="subcellular location">
    <subcellularLocation>
        <location evidence="4 5 6">Cell membrane</location>
        <topology evidence="8">Single-pass membrane protein</topology>
    </subcellularLocation>
    <subcellularLocation>
        <location evidence="4 5">Endomembrane system</location>
        <topology evidence="8">Single-pass membrane protein</topology>
    </subcellularLocation>
    <subcellularLocation>
        <location evidence="4">Cytoplasm</location>
        <location evidence="4">Perinuclear region</location>
    </subcellularLocation>
    <text evidence="4 5">Shifts from low-density microsome vesicles to the cell membrane upon insulin stimulation.</text>
</comment>
<comment type="tissue specificity">
    <text evidence="4 5">Expressed specifically in white and brown adipose tissues.</text>
</comment>
<comment type="induction">
    <text evidence="4 5">Target gene of PPARG, expression is induced upon PPARG activation (PubMed:26240143, PubMed:26629404). Expression is inhibited by TNF (PubMed:26240143).</text>
</comment>
<comment type="disruption phenotype">
    <text evidence="5">Mutant adipocytes show reduced glucose uptake in response to an insulin stimulus (PubMed:26629404). Knockout animals placed on high-fat diet along with wild-type littermates exhibit an increased weight gain, significant elevated blood insulin and glucose levelswith insulin resistance (PubMed:26629404).</text>
</comment>
<comment type="similarity">
    <text evidence="7">Belongs to the CD225/Dispanin family.</text>
</comment>
<dbReference type="EMBL" id="AK048522">
    <property type="protein sequence ID" value="BAC33359.1"/>
    <property type="molecule type" value="mRNA"/>
</dbReference>
<dbReference type="EMBL" id="AK158395">
    <property type="protein sequence ID" value="BAE34485.1"/>
    <property type="molecule type" value="mRNA"/>
</dbReference>
<dbReference type="EMBL" id="BX000359">
    <property type="status" value="NOT_ANNOTATED_CDS"/>
    <property type="molecule type" value="Genomic_DNA"/>
</dbReference>
<dbReference type="EMBL" id="BC119801">
    <property type="protein sequence ID" value="AAI19802.1"/>
    <property type="molecule type" value="mRNA"/>
</dbReference>
<dbReference type="EMBL" id="BC122875">
    <property type="protein sequence ID" value="AAI22876.1"/>
    <property type="molecule type" value="mRNA"/>
</dbReference>
<dbReference type="CCDS" id="CCDS25069.1"/>
<dbReference type="RefSeq" id="NP_808377.1">
    <property type="nucleotide sequence ID" value="NM_177709.3"/>
</dbReference>
<dbReference type="FunCoup" id="Q8C838">
    <property type="interactions" value="233"/>
</dbReference>
<dbReference type="STRING" id="10090.ENSMUSP00000061634"/>
<dbReference type="iPTMnet" id="Q8C838"/>
<dbReference type="PhosphoSitePlus" id="Q8C838"/>
<dbReference type="SwissPalm" id="Q8C838"/>
<dbReference type="jPOST" id="Q8C838"/>
<dbReference type="PaxDb" id="10090-ENSMUSP00000061634"/>
<dbReference type="PeptideAtlas" id="Q8C838"/>
<dbReference type="ProteomicsDB" id="298338"/>
<dbReference type="Antibodypedia" id="58595">
    <property type="antibodies" value="147 antibodies from 27 providers"/>
</dbReference>
<dbReference type="DNASU" id="237858"/>
<dbReference type="Ensembl" id="ENSMUST00000062024.3">
    <property type="protein sequence ID" value="ENSMUSP00000061634.3"/>
    <property type="gene ID" value="ENSMUSG00000046275.3"/>
</dbReference>
<dbReference type="GeneID" id="237858"/>
<dbReference type="KEGG" id="mmu:237858"/>
<dbReference type="UCSC" id="uc007kfy.2">
    <property type="organism name" value="mouse"/>
</dbReference>
<dbReference type="AGR" id="MGI:3029307"/>
<dbReference type="CTD" id="286753"/>
<dbReference type="MGI" id="MGI:3029307">
    <property type="gene designation" value="Trarg1"/>
</dbReference>
<dbReference type="VEuPathDB" id="HostDB:ENSMUSG00000046275"/>
<dbReference type="eggNOG" id="ENOG502RY44">
    <property type="taxonomic scope" value="Eukaryota"/>
</dbReference>
<dbReference type="GeneTree" id="ENSGT00940000160337"/>
<dbReference type="HOGENOM" id="CLU_103195_0_0_1"/>
<dbReference type="InParanoid" id="Q8C838"/>
<dbReference type="OMA" id="AITSCFC"/>
<dbReference type="OrthoDB" id="9049275at2759"/>
<dbReference type="PhylomeDB" id="Q8C838"/>
<dbReference type="TreeFam" id="TF333012"/>
<dbReference type="BioGRID-ORCS" id="237858">
    <property type="hits" value="3 hits in 76 CRISPR screens"/>
</dbReference>
<dbReference type="PRO" id="PR:Q8C838"/>
<dbReference type="Proteomes" id="UP000000589">
    <property type="component" value="Chromosome 11"/>
</dbReference>
<dbReference type="RNAct" id="Q8C838">
    <property type="molecule type" value="protein"/>
</dbReference>
<dbReference type="Bgee" id="ENSMUSG00000046275">
    <property type="expression patterns" value="Expressed in lumbar dorsal root ganglion and 70 other cell types or tissues"/>
</dbReference>
<dbReference type="GO" id="GO:0030659">
    <property type="term" value="C:cytoplasmic vesicle membrane"/>
    <property type="evidence" value="ECO:0000314"/>
    <property type="project" value="UniProtKB"/>
</dbReference>
<dbReference type="GO" id="GO:0012505">
    <property type="term" value="C:endomembrane system"/>
    <property type="evidence" value="ECO:0007669"/>
    <property type="project" value="UniProtKB-SubCell"/>
</dbReference>
<dbReference type="GO" id="GO:0048471">
    <property type="term" value="C:perinuclear region of cytoplasm"/>
    <property type="evidence" value="ECO:0000314"/>
    <property type="project" value="UniProtKB"/>
</dbReference>
<dbReference type="GO" id="GO:0005886">
    <property type="term" value="C:plasma membrane"/>
    <property type="evidence" value="ECO:0000314"/>
    <property type="project" value="UniProtKB"/>
</dbReference>
<dbReference type="GO" id="GO:0032869">
    <property type="term" value="P:cellular response to insulin stimulus"/>
    <property type="evidence" value="ECO:0000314"/>
    <property type="project" value="UniProtKB"/>
</dbReference>
<dbReference type="GO" id="GO:0099638">
    <property type="term" value="P:endosome to plasma membrane protein transport"/>
    <property type="evidence" value="ECO:0000314"/>
    <property type="project" value="UniProtKB"/>
</dbReference>
<dbReference type="GO" id="GO:0051649">
    <property type="term" value="P:establishment of localization in cell"/>
    <property type="evidence" value="ECO:0000315"/>
    <property type="project" value="MGI"/>
</dbReference>
<dbReference type="GO" id="GO:0044381">
    <property type="term" value="P:glucose import in response to insulin stimulus"/>
    <property type="evidence" value="ECO:0000314"/>
    <property type="project" value="UniProtKB"/>
</dbReference>
<dbReference type="GO" id="GO:0072659">
    <property type="term" value="P:protein localization to plasma membrane"/>
    <property type="evidence" value="ECO:0000314"/>
    <property type="project" value="UniProtKB"/>
</dbReference>
<dbReference type="GO" id="GO:0099500">
    <property type="term" value="P:vesicle fusion to plasma membrane"/>
    <property type="evidence" value="ECO:0000315"/>
    <property type="project" value="MGI"/>
</dbReference>
<dbReference type="InterPro" id="IPR051423">
    <property type="entry name" value="CD225/Dispanin"/>
</dbReference>
<dbReference type="InterPro" id="IPR007593">
    <property type="entry name" value="CD225/Dispanin_fam"/>
</dbReference>
<dbReference type="PANTHER" id="PTHR14948">
    <property type="entry name" value="NG5"/>
    <property type="match status" value="1"/>
</dbReference>
<dbReference type="PANTHER" id="PTHR14948:SF1">
    <property type="entry name" value="TRAFFICKING REGULATOR OF GLUT4 1"/>
    <property type="match status" value="1"/>
</dbReference>
<dbReference type="Pfam" id="PF04505">
    <property type="entry name" value="CD225"/>
    <property type="match status" value="1"/>
</dbReference>
<sequence length="173" mass="18719">MANPAQPPLQDPGSTSPLELPEMEKLLTKVENKDDQALNLSKSLSGALDLEQNGHSLPFKVISEGHRQPSLSGSPSRVSSRRASSVITTSYAQDQEAPKDYLVLAIASCFCPVWPLNLIPLIFSIMSRSSVQQGDLDGARRLGRLARLLSITFIILGIVIIIVAVTVNFTVPK</sequence>
<keyword id="KW-1003">Cell membrane</keyword>
<keyword id="KW-0963">Cytoplasm</keyword>
<keyword id="KW-0472">Membrane</keyword>
<keyword id="KW-0597">Phosphoprotein</keyword>
<keyword id="KW-1185">Reference proteome</keyword>
<keyword id="KW-0812">Transmembrane</keyword>
<keyword id="KW-1133">Transmembrane helix</keyword>
<organism>
    <name type="scientific">Mus musculus</name>
    <name type="common">Mouse</name>
    <dbReference type="NCBI Taxonomy" id="10090"/>
    <lineage>
        <taxon>Eukaryota</taxon>
        <taxon>Metazoa</taxon>
        <taxon>Chordata</taxon>
        <taxon>Craniata</taxon>
        <taxon>Vertebrata</taxon>
        <taxon>Euteleostomi</taxon>
        <taxon>Mammalia</taxon>
        <taxon>Eutheria</taxon>
        <taxon>Euarchontoglires</taxon>
        <taxon>Glires</taxon>
        <taxon>Rodentia</taxon>
        <taxon>Myomorpha</taxon>
        <taxon>Muroidea</taxon>
        <taxon>Muridae</taxon>
        <taxon>Murinae</taxon>
        <taxon>Mus</taxon>
        <taxon>Mus</taxon>
    </lineage>
</organism>
<reference key="1">
    <citation type="journal article" date="2005" name="Science">
        <title>The transcriptional landscape of the mammalian genome.</title>
        <authorList>
            <person name="Carninci P."/>
            <person name="Kasukawa T."/>
            <person name="Katayama S."/>
            <person name="Gough J."/>
            <person name="Frith M.C."/>
            <person name="Maeda N."/>
            <person name="Oyama R."/>
            <person name="Ravasi T."/>
            <person name="Lenhard B."/>
            <person name="Wells C."/>
            <person name="Kodzius R."/>
            <person name="Shimokawa K."/>
            <person name="Bajic V.B."/>
            <person name="Brenner S.E."/>
            <person name="Batalov S."/>
            <person name="Forrest A.R."/>
            <person name="Zavolan M."/>
            <person name="Davis M.J."/>
            <person name="Wilming L.G."/>
            <person name="Aidinis V."/>
            <person name="Allen J.E."/>
            <person name="Ambesi-Impiombato A."/>
            <person name="Apweiler R."/>
            <person name="Aturaliya R.N."/>
            <person name="Bailey T.L."/>
            <person name="Bansal M."/>
            <person name="Baxter L."/>
            <person name="Beisel K.W."/>
            <person name="Bersano T."/>
            <person name="Bono H."/>
            <person name="Chalk A.M."/>
            <person name="Chiu K.P."/>
            <person name="Choudhary V."/>
            <person name="Christoffels A."/>
            <person name="Clutterbuck D.R."/>
            <person name="Crowe M.L."/>
            <person name="Dalla E."/>
            <person name="Dalrymple B.P."/>
            <person name="de Bono B."/>
            <person name="Della Gatta G."/>
            <person name="di Bernardo D."/>
            <person name="Down T."/>
            <person name="Engstrom P."/>
            <person name="Fagiolini M."/>
            <person name="Faulkner G."/>
            <person name="Fletcher C.F."/>
            <person name="Fukushima T."/>
            <person name="Furuno M."/>
            <person name="Futaki S."/>
            <person name="Gariboldi M."/>
            <person name="Georgii-Hemming P."/>
            <person name="Gingeras T.R."/>
            <person name="Gojobori T."/>
            <person name="Green R.E."/>
            <person name="Gustincich S."/>
            <person name="Harbers M."/>
            <person name="Hayashi Y."/>
            <person name="Hensch T.K."/>
            <person name="Hirokawa N."/>
            <person name="Hill D."/>
            <person name="Huminiecki L."/>
            <person name="Iacono M."/>
            <person name="Ikeo K."/>
            <person name="Iwama A."/>
            <person name="Ishikawa T."/>
            <person name="Jakt M."/>
            <person name="Kanapin A."/>
            <person name="Katoh M."/>
            <person name="Kawasawa Y."/>
            <person name="Kelso J."/>
            <person name="Kitamura H."/>
            <person name="Kitano H."/>
            <person name="Kollias G."/>
            <person name="Krishnan S.P."/>
            <person name="Kruger A."/>
            <person name="Kummerfeld S.K."/>
            <person name="Kurochkin I.V."/>
            <person name="Lareau L.F."/>
            <person name="Lazarevic D."/>
            <person name="Lipovich L."/>
            <person name="Liu J."/>
            <person name="Liuni S."/>
            <person name="McWilliam S."/>
            <person name="Madan Babu M."/>
            <person name="Madera M."/>
            <person name="Marchionni L."/>
            <person name="Matsuda H."/>
            <person name="Matsuzawa S."/>
            <person name="Miki H."/>
            <person name="Mignone F."/>
            <person name="Miyake S."/>
            <person name="Morris K."/>
            <person name="Mottagui-Tabar S."/>
            <person name="Mulder N."/>
            <person name="Nakano N."/>
            <person name="Nakauchi H."/>
            <person name="Ng P."/>
            <person name="Nilsson R."/>
            <person name="Nishiguchi S."/>
            <person name="Nishikawa S."/>
            <person name="Nori F."/>
            <person name="Ohara O."/>
            <person name="Okazaki Y."/>
            <person name="Orlando V."/>
            <person name="Pang K.C."/>
            <person name="Pavan W.J."/>
            <person name="Pavesi G."/>
            <person name="Pesole G."/>
            <person name="Petrovsky N."/>
            <person name="Piazza S."/>
            <person name="Reed J."/>
            <person name="Reid J.F."/>
            <person name="Ring B.Z."/>
            <person name="Ringwald M."/>
            <person name="Rost B."/>
            <person name="Ruan Y."/>
            <person name="Salzberg S.L."/>
            <person name="Sandelin A."/>
            <person name="Schneider C."/>
            <person name="Schoenbach C."/>
            <person name="Sekiguchi K."/>
            <person name="Semple C.A."/>
            <person name="Seno S."/>
            <person name="Sessa L."/>
            <person name="Sheng Y."/>
            <person name="Shibata Y."/>
            <person name="Shimada H."/>
            <person name="Shimada K."/>
            <person name="Silva D."/>
            <person name="Sinclair B."/>
            <person name="Sperling S."/>
            <person name="Stupka E."/>
            <person name="Sugiura K."/>
            <person name="Sultana R."/>
            <person name="Takenaka Y."/>
            <person name="Taki K."/>
            <person name="Tammoja K."/>
            <person name="Tan S.L."/>
            <person name="Tang S."/>
            <person name="Taylor M.S."/>
            <person name="Tegner J."/>
            <person name="Teichmann S.A."/>
            <person name="Ueda H.R."/>
            <person name="van Nimwegen E."/>
            <person name="Verardo R."/>
            <person name="Wei C.L."/>
            <person name="Yagi K."/>
            <person name="Yamanishi H."/>
            <person name="Zabarovsky E."/>
            <person name="Zhu S."/>
            <person name="Zimmer A."/>
            <person name="Hide W."/>
            <person name="Bult C."/>
            <person name="Grimmond S.M."/>
            <person name="Teasdale R.D."/>
            <person name="Liu E.T."/>
            <person name="Brusic V."/>
            <person name="Quackenbush J."/>
            <person name="Wahlestedt C."/>
            <person name="Mattick J.S."/>
            <person name="Hume D.A."/>
            <person name="Kai C."/>
            <person name="Sasaki D."/>
            <person name="Tomaru Y."/>
            <person name="Fukuda S."/>
            <person name="Kanamori-Katayama M."/>
            <person name="Suzuki M."/>
            <person name="Aoki J."/>
            <person name="Arakawa T."/>
            <person name="Iida J."/>
            <person name="Imamura K."/>
            <person name="Itoh M."/>
            <person name="Kato T."/>
            <person name="Kawaji H."/>
            <person name="Kawagashira N."/>
            <person name="Kawashima T."/>
            <person name="Kojima M."/>
            <person name="Kondo S."/>
            <person name="Konno H."/>
            <person name="Nakano K."/>
            <person name="Ninomiya N."/>
            <person name="Nishio T."/>
            <person name="Okada M."/>
            <person name="Plessy C."/>
            <person name="Shibata K."/>
            <person name="Shiraki T."/>
            <person name="Suzuki S."/>
            <person name="Tagami M."/>
            <person name="Waki K."/>
            <person name="Watahiki A."/>
            <person name="Okamura-Oho Y."/>
            <person name="Suzuki H."/>
            <person name="Kawai J."/>
            <person name="Hayashizaki Y."/>
        </authorList>
    </citation>
    <scope>NUCLEOTIDE SEQUENCE [LARGE SCALE MRNA]</scope>
    <source>
        <strain>C57BL/6J</strain>
        <tissue>Head</tissue>
        <tissue>Inner ear</tissue>
    </source>
</reference>
<reference key="2">
    <citation type="journal article" date="2009" name="PLoS Biol.">
        <title>Lineage-specific biology revealed by a finished genome assembly of the mouse.</title>
        <authorList>
            <person name="Church D.M."/>
            <person name="Goodstadt L."/>
            <person name="Hillier L.W."/>
            <person name="Zody M.C."/>
            <person name="Goldstein S."/>
            <person name="She X."/>
            <person name="Bult C.J."/>
            <person name="Agarwala R."/>
            <person name="Cherry J.L."/>
            <person name="DiCuccio M."/>
            <person name="Hlavina W."/>
            <person name="Kapustin Y."/>
            <person name="Meric P."/>
            <person name="Maglott D."/>
            <person name="Birtle Z."/>
            <person name="Marques A.C."/>
            <person name="Graves T."/>
            <person name="Zhou S."/>
            <person name="Teague B."/>
            <person name="Potamousis K."/>
            <person name="Churas C."/>
            <person name="Place M."/>
            <person name="Herschleb J."/>
            <person name="Runnheim R."/>
            <person name="Forrest D."/>
            <person name="Amos-Landgraf J."/>
            <person name="Schwartz D.C."/>
            <person name="Cheng Z."/>
            <person name="Lindblad-Toh K."/>
            <person name="Eichler E.E."/>
            <person name="Ponting C.P."/>
        </authorList>
    </citation>
    <scope>NUCLEOTIDE SEQUENCE [LARGE SCALE GENOMIC DNA]</scope>
    <source>
        <strain>C57BL/6J</strain>
    </source>
</reference>
<reference key="3">
    <citation type="journal article" date="2004" name="Genome Res.">
        <title>The status, quality, and expansion of the NIH full-length cDNA project: the Mammalian Gene Collection (MGC).</title>
        <authorList>
            <consortium name="The MGC Project Team"/>
        </authorList>
    </citation>
    <scope>NUCLEOTIDE SEQUENCE [LARGE SCALE MRNA]</scope>
</reference>
<reference key="4">
    <citation type="journal article" date="2010" name="Cell">
        <title>A tissue-specific atlas of mouse protein phosphorylation and expression.</title>
        <authorList>
            <person name="Huttlin E.L."/>
            <person name="Jedrychowski M.P."/>
            <person name="Elias J.E."/>
            <person name="Goswami T."/>
            <person name="Rad R."/>
            <person name="Beausoleil S.A."/>
            <person name="Villen J."/>
            <person name="Haas W."/>
            <person name="Sowa M.E."/>
            <person name="Gygi S.P."/>
        </authorList>
    </citation>
    <scope>IDENTIFICATION BY MASS SPECTROMETRY [LARGE SCALE ANALYSIS]</scope>
    <source>
        <tissue>Brown adipose tissue</tissue>
    </source>
</reference>
<reference key="5">
    <citation type="journal article" date="2012" name="PLoS ONE">
        <title>The dispanins: a novel gene family of ancient origin that contains 14 human members.</title>
        <authorList>
            <person name="Sallman Almen M."/>
            <person name="Bringeland N."/>
            <person name="Fredriksson R."/>
            <person name="Schioth H.B."/>
        </authorList>
    </citation>
    <scope>GENE FAMILY</scope>
</reference>
<reference key="6">
    <citation type="journal article" date="2015" name="J. Biol. Chem.">
        <title>Proteomic Analysis of GLUT4 Storage Vesicles Reveals Tumor Suppressor Candidate 5 (TUSC5) as a Novel Regulator of Insulin Action in Adipocytes.</title>
        <authorList>
            <person name="Fazakerley D.J."/>
            <person name="Naghiloo S."/>
            <person name="Chaudhuri R."/>
            <person name="Koumanov F."/>
            <person name="Burchfield J.G."/>
            <person name="Thomas K.C."/>
            <person name="Krycer J.R."/>
            <person name="Prior M.J."/>
            <person name="Parker B.L."/>
            <person name="Murrow B.A."/>
            <person name="Stoeckli J."/>
            <person name="Meoli C.C."/>
            <person name="Holman G.D."/>
            <person name="James D.E."/>
        </authorList>
    </citation>
    <scope>FUNCTION</scope>
    <scope>SUBCELLULAR LOCATION</scope>
    <scope>TISSUE SPECIFICITY</scope>
    <scope>INDUCTION BY TNF</scope>
</reference>
<reference key="7">
    <citation type="journal article" date="2015" name="Mol. Metab.">
        <title>TUSC5 regulates insulin-mediated adipose tissue glucose uptake by modulation of GLUT4 recycling.</title>
        <authorList>
            <person name="Beaton N."/>
            <person name="Rudigier C."/>
            <person name="Moest H."/>
            <person name="Mueller S."/>
            <person name="Mrosek N."/>
            <person name="Roeder E."/>
            <person name="Rudofsky G."/>
            <person name="Ruelicke T."/>
            <person name="Ukropec J."/>
            <person name="Ukropcova B."/>
            <person name="Augustin R."/>
            <person name="Neubauer H."/>
            <person name="Wolfrum C."/>
        </authorList>
    </citation>
    <scope>FUNCTION</scope>
    <scope>TISSUE SPECIFICITY</scope>
    <scope>SUBCELLULAR LOCATION</scope>
    <scope>INTERACTION WITH SLC2A4</scope>
    <scope>DISRUPTION PHENOTYPE</scope>
    <scope>INDUCTION BY PPARG</scope>
</reference>
<reference key="8">
    <citation type="journal article" date="2018" name="Biochemistry">
        <title>Membrane Topology of Trafficking Regulator of GLUT4 1 (TRARG1).</title>
        <authorList>
            <person name="Duan X."/>
            <person name="Krycer J.R."/>
            <person name="Cooke K.C."/>
            <person name="Yang G."/>
            <person name="James D.E."/>
            <person name="Fazakerley D.J."/>
        </authorList>
    </citation>
    <scope>SUBCELLULAR LOCATION</scope>
    <scope>TOPOLOGY</scope>
</reference>
<feature type="chain" id="PRO_0000263640" description="Trafficking regulator of GLUT4 1">
    <location>
        <begin position="1"/>
        <end position="173"/>
    </location>
</feature>
<feature type="topological domain" description="Cytoplasmic" evidence="6">
    <location>
        <begin position="1"/>
        <end position="102"/>
    </location>
</feature>
<feature type="intramembrane region" description="Helical" evidence="2">
    <location>
        <begin position="103"/>
        <end position="123"/>
    </location>
</feature>
<feature type="topological domain" description="Cytoplasmic" evidence="6">
    <location>
        <begin position="124"/>
        <end position="150"/>
    </location>
</feature>
<feature type="transmembrane region" description="Helical" evidence="2">
    <location>
        <begin position="151"/>
        <end position="171"/>
    </location>
</feature>
<feature type="topological domain" description="Extracellular" evidence="6">
    <location>
        <begin position="172"/>
        <end position="173"/>
    </location>
</feature>
<feature type="region of interest" description="Disordered" evidence="3">
    <location>
        <begin position="1"/>
        <end position="20"/>
    </location>
</feature>
<feature type="compositionally biased region" description="Pro residues" evidence="3">
    <location>
        <begin position="1"/>
        <end position="10"/>
    </location>
</feature>
<feature type="modified residue" description="Phosphoserine" evidence="1">
    <location>
        <position position="16"/>
    </location>
</feature>
<feature type="modified residue" description="Phosphoserine" evidence="1">
    <location>
        <position position="43"/>
    </location>
</feature>
<feature type="modified residue" description="Phosphoserine" evidence="1">
    <location>
        <position position="45"/>
    </location>
</feature>
<feature type="modified residue" description="Phosphoserine" evidence="1">
    <location>
        <position position="70"/>
    </location>
</feature>
<feature type="modified residue" description="Phosphoserine" evidence="1">
    <location>
        <position position="84"/>
    </location>
</feature>
<feature type="modified residue" description="Phosphoserine" evidence="1">
    <location>
        <position position="85"/>
    </location>
</feature>
<proteinExistence type="evidence at protein level"/>
<name>TARG1_MOUSE</name>
<protein>
    <recommendedName>
        <fullName evidence="7">Trafficking regulator of GLUT4 1</fullName>
    </recommendedName>
    <alternativeName>
        <fullName>Dispanin subfamily B member 1</fullName>
        <shortName>DSPB1</shortName>
    </alternativeName>
    <alternativeName>
        <fullName>Tumor suppressor candidate 5 homolog</fullName>
    </alternativeName>
</protein>
<gene>
    <name type="primary">Trarg1</name>
    <name evidence="9" type="synonym">Tusc5</name>
</gene>
<accession>Q8C838</accession>
<evidence type="ECO:0000250" key="1">
    <source>
        <dbReference type="UniProtKB" id="Q2MHH0"/>
    </source>
</evidence>
<evidence type="ECO:0000255" key="2"/>
<evidence type="ECO:0000256" key="3">
    <source>
        <dbReference type="SAM" id="MobiDB-lite"/>
    </source>
</evidence>
<evidence type="ECO:0000269" key="4">
    <source>
    </source>
</evidence>
<evidence type="ECO:0000269" key="5">
    <source>
    </source>
</evidence>
<evidence type="ECO:0000269" key="6">
    <source>
    </source>
</evidence>
<evidence type="ECO:0000305" key="7"/>
<evidence type="ECO:0000305" key="8">
    <source>
    </source>
</evidence>
<evidence type="ECO:0000312" key="9">
    <source>
        <dbReference type="MGI" id="MGI:3029307"/>
    </source>
</evidence>